<name>GPDA_SYNR3</name>
<reference key="1">
    <citation type="submission" date="2006-05" db="EMBL/GenBank/DDBJ databases">
        <authorList>
            <consortium name="Genoscope"/>
        </authorList>
    </citation>
    <scope>NUCLEOTIDE SEQUENCE [LARGE SCALE GENOMIC DNA]</scope>
    <source>
        <strain>RCC307</strain>
    </source>
</reference>
<feature type="chain" id="PRO_1000049565" description="Glycerol-3-phosphate dehydrogenase [NAD(P)+]">
    <location>
        <begin position="1"/>
        <end position="301"/>
    </location>
</feature>
<feature type="active site" description="Proton acceptor" evidence="1">
    <location>
        <position position="161"/>
    </location>
</feature>
<feature type="binding site" evidence="1">
    <location>
        <position position="13"/>
    </location>
    <ligand>
        <name>NADPH</name>
        <dbReference type="ChEBI" id="CHEBI:57783"/>
    </ligand>
</feature>
<feature type="binding site" evidence="1">
    <location>
        <position position="33"/>
    </location>
    <ligand>
        <name>NADPH</name>
        <dbReference type="ChEBI" id="CHEBI:57783"/>
    </ligand>
</feature>
<feature type="binding site" evidence="1">
    <location>
        <position position="78"/>
    </location>
    <ligand>
        <name>NADPH</name>
        <dbReference type="ChEBI" id="CHEBI:57783"/>
    </ligand>
</feature>
<feature type="binding site" evidence="1">
    <location>
        <position position="78"/>
    </location>
    <ligand>
        <name>sn-glycerol 3-phosphate</name>
        <dbReference type="ChEBI" id="CHEBI:57597"/>
    </ligand>
</feature>
<feature type="binding site" evidence="1">
    <location>
        <position position="106"/>
    </location>
    <ligand>
        <name>sn-glycerol 3-phosphate</name>
        <dbReference type="ChEBI" id="CHEBI:57597"/>
    </ligand>
</feature>
<feature type="binding site" evidence="1">
    <location>
        <position position="110"/>
    </location>
    <ligand>
        <name>NADPH</name>
        <dbReference type="ChEBI" id="CHEBI:57783"/>
    </ligand>
</feature>
<feature type="binding site" evidence="1">
    <location>
        <position position="161"/>
    </location>
    <ligand>
        <name>sn-glycerol 3-phosphate</name>
        <dbReference type="ChEBI" id="CHEBI:57597"/>
    </ligand>
</feature>
<feature type="binding site" evidence="1">
    <location>
        <position position="214"/>
    </location>
    <ligand>
        <name>sn-glycerol 3-phosphate</name>
        <dbReference type="ChEBI" id="CHEBI:57597"/>
    </ligand>
</feature>
<feature type="binding site" evidence="1">
    <location>
        <position position="224"/>
    </location>
    <ligand>
        <name>sn-glycerol 3-phosphate</name>
        <dbReference type="ChEBI" id="CHEBI:57597"/>
    </ligand>
</feature>
<feature type="binding site" evidence="1">
    <location>
        <position position="225"/>
    </location>
    <ligand>
        <name>NADPH</name>
        <dbReference type="ChEBI" id="CHEBI:57783"/>
    </ligand>
</feature>
<feature type="binding site" evidence="1">
    <location>
        <position position="225"/>
    </location>
    <ligand>
        <name>sn-glycerol 3-phosphate</name>
        <dbReference type="ChEBI" id="CHEBI:57597"/>
    </ligand>
</feature>
<feature type="binding site" evidence="1">
    <location>
        <position position="226"/>
    </location>
    <ligand>
        <name>sn-glycerol 3-phosphate</name>
        <dbReference type="ChEBI" id="CHEBI:57597"/>
    </ligand>
</feature>
<feature type="binding site" evidence="1">
    <location>
        <position position="251"/>
    </location>
    <ligand>
        <name>NADPH</name>
        <dbReference type="ChEBI" id="CHEBI:57783"/>
    </ligand>
</feature>
<evidence type="ECO:0000255" key="1">
    <source>
        <dbReference type="HAMAP-Rule" id="MF_00394"/>
    </source>
</evidence>
<protein>
    <recommendedName>
        <fullName evidence="1">Glycerol-3-phosphate dehydrogenase [NAD(P)+]</fullName>
        <ecNumber evidence="1">1.1.1.94</ecNumber>
    </recommendedName>
    <alternativeName>
        <fullName evidence="1">NAD(P)(+)-dependent glycerol-3-phosphate dehydrogenase</fullName>
    </alternativeName>
    <alternativeName>
        <fullName evidence="1">NAD(P)H-dependent dihydroxyacetone-phosphate reductase</fullName>
    </alternativeName>
</protein>
<sequence length="301" mass="31216">MALTIGVLGGGAWGSTLAGLLSQGGHRVQIWRREHGPQALQALAASEVLVGATALVGVSGMAQQIKGWSARPIVSCSKGLDPSSGQTASALWKAACPLWPVVVLSGPNLASELQQGLPAASVLAGHDEGLLSTLQQQLSTEQFRLYRNNDPLGTELAGALKNVMAVAAGICDGLQLGANARASLLTRALAEMATVLHGLGGRQDTLYGLAGIGDLLATATSPLSRNYRFGLCMADGLDRQQALEKVGATVEGVPTCEAIASLGRQKQWSLPITESVALLLQGALSPAQALQQLMQRELRCE</sequence>
<keyword id="KW-0963">Cytoplasm</keyword>
<keyword id="KW-0444">Lipid biosynthesis</keyword>
<keyword id="KW-0443">Lipid metabolism</keyword>
<keyword id="KW-0520">NAD</keyword>
<keyword id="KW-0521">NADP</keyword>
<keyword id="KW-0547">Nucleotide-binding</keyword>
<keyword id="KW-0560">Oxidoreductase</keyword>
<keyword id="KW-0594">Phospholipid biosynthesis</keyword>
<keyword id="KW-1208">Phospholipid metabolism</keyword>
<keyword id="KW-1185">Reference proteome</keyword>
<accession>A5GTA8</accession>
<organism>
    <name type="scientific">Synechococcus sp. (strain RCC307)</name>
    <dbReference type="NCBI Taxonomy" id="316278"/>
    <lineage>
        <taxon>Bacteria</taxon>
        <taxon>Bacillati</taxon>
        <taxon>Cyanobacteriota</taxon>
        <taxon>Cyanophyceae</taxon>
        <taxon>Synechococcales</taxon>
        <taxon>Synechococcaceae</taxon>
        <taxon>Synechococcus</taxon>
    </lineage>
</organism>
<comment type="function">
    <text evidence="1">Catalyzes the reduction of the glycolytic intermediate dihydroxyacetone phosphate (DHAP) to sn-glycerol 3-phosphate (G3P), the key precursor for phospholipid synthesis.</text>
</comment>
<comment type="catalytic activity">
    <reaction evidence="1">
        <text>sn-glycerol 3-phosphate + NAD(+) = dihydroxyacetone phosphate + NADH + H(+)</text>
        <dbReference type="Rhea" id="RHEA:11092"/>
        <dbReference type="ChEBI" id="CHEBI:15378"/>
        <dbReference type="ChEBI" id="CHEBI:57540"/>
        <dbReference type="ChEBI" id="CHEBI:57597"/>
        <dbReference type="ChEBI" id="CHEBI:57642"/>
        <dbReference type="ChEBI" id="CHEBI:57945"/>
        <dbReference type="EC" id="1.1.1.94"/>
    </reaction>
    <physiologicalReaction direction="right-to-left" evidence="1">
        <dbReference type="Rhea" id="RHEA:11094"/>
    </physiologicalReaction>
</comment>
<comment type="catalytic activity">
    <reaction evidence="1">
        <text>sn-glycerol 3-phosphate + NADP(+) = dihydroxyacetone phosphate + NADPH + H(+)</text>
        <dbReference type="Rhea" id="RHEA:11096"/>
        <dbReference type="ChEBI" id="CHEBI:15378"/>
        <dbReference type="ChEBI" id="CHEBI:57597"/>
        <dbReference type="ChEBI" id="CHEBI:57642"/>
        <dbReference type="ChEBI" id="CHEBI:57783"/>
        <dbReference type="ChEBI" id="CHEBI:58349"/>
        <dbReference type="EC" id="1.1.1.94"/>
    </reaction>
    <physiologicalReaction direction="right-to-left" evidence="1">
        <dbReference type="Rhea" id="RHEA:11098"/>
    </physiologicalReaction>
</comment>
<comment type="pathway">
    <text evidence="1">Membrane lipid metabolism; glycerophospholipid metabolism.</text>
</comment>
<comment type="subcellular location">
    <subcellularLocation>
        <location evidence="1">Cytoplasm</location>
    </subcellularLocation>
</comment>
<comment type="similarity">
    <text evidence="1">Belongs to the NAD-dependent glycerol-3-phosphate dehydrogenase family.</text>
</comment>
<gene>
    <name evidence="1" type="primary">gpsA</name>
    <name type="ordered locus">SynRCC307_1214</name>
</gene>
<proteinExistence type="inferred from homology"/>
<dbReference type="EC" id="1.1.1.94" evidence="1"/>
<dbReference type="EMBL" id="CT978603">
    <property type="protein sequence ID" value="CAK28117.1"/>
    <property type="molecule type" value="Genomic_DNA"/>
</dbReference>
<dbReference type="SMR" id="A5GTA8"/>
<dbReference type="STRING" id="316278.SynRCC307_1214"/>
<dbReference type="KEGG" id="syr:SynRCC307_1214"/>
<dbReference type="eggNOG" id="COG0240">
    <property type="taxonomic scope" value="Bacteria"/>
</dbReference>
<dbReference type="HOGENOM" id="CLU_033449_0_2_3"/>
<dbReference type="OrthoDB" id="9812273at2"/>
<dbReference type="UniPathway" id="UPA00940"/>
<dbReference type="Proteomes" id="UP000001115">
    <property type="component" value="Chromosome"/>
</dbReference>
<dbReference type="GO" id="GO:0005829">
    <property type="term" value="C:cytosol"/>
    <property type="evidence" value="ECO:0007669"/>
    <property type="project" value="TreeGrafter"/>
</dbReference>
<dbReference type="GO" id="GO:0047952">
    <property type="term" value="F:glycerol-3-phosphate dehydrogenase [NAD(P)+] activity"/>
    <property type="evidence" value="ECO:0007669"/>
    <property type="project" value="UniProtKB-UniRule"/>
</dbReference>
<dbReference type="GO" id="GO:0051287">
    <property type="term" value="F:NAD binding"/>
    <property type="evidence" value="ECO:0007669"/>
    <property type="project" value="InterPro"/>
</dbReference>
<dbReference type="GO" id="GO:0005975">
    <property type="term" value="P:carbohydrate metabolic process"/>
    <property type="evidence" value="ECO:0007669"/>
    <property type="project" value="InterPro"/>
</dbReference>
<dbReference type="GO" id="GO:0046167">
    <property type="term" value="P:glycerol-3-phosphate biosynthetic process"/>
    <property type="evidence" value="ECO:0007669"/>
    <property type="project" value="UniProtKB-UniRule"/>
</dbReference>
<dbReference type="GO" id="GO:0046168">
    <property type="term" value="P:glycerol-3-phosphate catabolic process"/>
    <property type="evidence" value="ECO:0007669"/>
    <property type="project" value="InterPro"/>
</dbReference>
<dbReference type="GO" id="GO:0006650">
    <property type="term" value="P:glycerophospholipid metabolic process"/>
    <property type="evidence" value="ECO:0007669"/>
    <property type="project" value="UniProtKB-UniRule"/>
</dbReference>
<dbReference type="GO" id="GO:0008654">
    <property type="term" value="P:phospholipid biosynthetic process"/>
    <property type="evidence" value="ECO:0007669"/>
    <property type="project" value="UniProtKB-KW"/>
</dbReference>
<dbReference type="FunFam" id="1.10.1040.10:FF:000001">
    <property type="entry name" value="Glycerol-3-phosphate dehydrogenase [NAD(P)+]"/>
    <property type="match status" value="1"/>
</dbReference>
<dbReference type="Gene3D" id="1.10.1040.10">
    <property type="entry name" value="N-(1-d-carboxylethyl)-l-norvaline Dehydrogenase, domain 2"/>
    <property type="match status" value="1"/>
</dbReference>
<dbReference type="Gene3D" id="3.40.50.720">
    <property type="entry name" value="NAD(P)-binding Rossmann-like Domain"/>
    <property type="match status" value="2"/>
</dbReference>
<dbReference type="HAMAP" id="MF_00394">
    <property type="entry name" value="NAD_Glyc3P_dehydrog"/>
    <property type="match status" value="1"/>
</dbReference>
<dbReference type="InterPro" id="IPR008927">
    <property type="entry name" value="6-PGluconate_DH-like_C_sf"/>
</dbReference>
<dbReference type="InterPro" id="IPR013328">
    <property type="entry name" value="6PGD_dom2"/>
</dbReference>
<dbReference type="InterPro" id="IPR006168">
    <property type="entry name" value="G3P_DH_NAD-dep"/>
</dbReference>
<dbReference type="InterPro" id="IPR006109">
    <property type="entry name" value="G3P_DH_NAD-dep_C"/>
</dbReference>
<dbReference type="InterPro" id="IPR011128">
    <property type="entry name" value="G3P_DH_NAD-dep_N"/>
</dbReference>
<dbReference type="InterPro" id="IPR036291">
    <property type="entry name" value="NAD(P)-bd_dom_sf"/>
</dbReference>
<dbReference type="NCBIfam" id="NF000940">
    <property type="entry name" value="PRK00094.1-2"/>
    <property type="match status" value="1"/>
</dbReference>
<dbReference type="NCBIfam" id="NF000942">
    <property type="entry name" value="PRK00094.1-4"/>
    <property type="match status" value="1"/>
</dbReference>
<dbReference type="NCBIfam" id="NF011212">
    <property type="entry name" value="PRK14619.1"/>
    <property type="match status" value="1"/>
</dbReference>
<dbReference type="PANTHER" id="PTHR11728">
    <property type="entry name" value="GLYCEROL-3-PHOSPHATE DEHYDROGENASE"/>
    <property type="match status" value="1"/>
</dbReference>
<dbReference type="PANTHER" id="PTHR11728:SF1">
    <property type="entry name" value="GLYCEROL-3-PHOSPHATE DEHYDROGENASE [NAD(+)] 2, CHLOROPLASTIC"/>
    <property type="match status" value="1"/>
</dbReference>
<dbReference type="Pfam" id="PF07479">
    <property type="entry name" value="NAD_Gly3P_dh_C"/>
    <property type="match status" value="1"/>
</dbReference>
<dbReference type="Pfam" id="PF01210">
    <property type="entry name" value="NAD_Gly3P_dh_N"/>
    <property type="match status" value="2"/>
</dbReference>
<dbReference type="PIRSF" id="PIRSF000114">
    <property type="entry name" value="Glycerol-3-P_dh"/>
    <property type="match status" value="1"/>
</dbReference>
<dbReference type="PRINTS" id="PR00077">
    <property type="entry name" value="GPDHDRGNASE"/>
</dbReference>
<dbReference type="SUPFAM" id="SSF48179">
    <property type="entry name" value="6-phosphogluconate dehydrogenase C-terminal domain-like"/>
    <property type="match status" value="1"/>
</dbReference>
<dbReference type="SUPFAM" id="SSF51735">
    <property type="entry name" value="NAD(P)-binding Rossmann-fold domains"/>
    <property type="match status" value="1"/>
</dbReference>
<dbReference type="PROSITE" id="PS00957">
    <property type="entry name" value="NAD_G3PDH"/>
    <property type="match status" value="1"/>
</dbReference>